<dbReference type="EMBL" id="AAFI02000120">
    <property type="protein sequence ID" value="EAL63084.1"/>
    <property type="molecule type" value="Genomic_DNA"/>
</dbReference>
<dbReference type="RefSeq" id="XP_636587.1">
    <property type="nucleotide sequence ID" value="XM_631495.1"/>
</dbReference>
<dbReference type="FunCoup" id="Q54IJ9">
    <property type="interactions" value="478"/>
</dbReference>
<dbReference type="STRING" id="44689.Q54IJ9"/>
<dbReference type="PaxDb" id="44689-DDB0220086"/>
<dbReference type="EnsemblProtists" id="EAL63084">
    <property type="protein sequence ID" value="EAL63084"/>
    <property type="gene ID" value="DDB_G0288705"/>
</dbReference>
<dbReference type="GeneID" id="8626761"/>
<dbReference type="KEGG" id="ddi:DDB_G0288705"/>
<dbReference type="dictyBase" id="DDB_G0288705">
    <property type="gene designation" value="bzpQ"/>
</dbReference>
<dbReference type="VEuPathDB" id="AmoebaDB:DDB_G0288705"/>
<dbReference type="eggNOG" id="ENOG502S8CW">
    <property type="taxonomic scope" value="Eukaryota"/>
</dbReference>
<dbReference type="HOGENOM" id="CLU_304500_0_0_1"/>
<dbReference type="InParanoid" id="Q54IJ9"/>
<dbReference type="OMA" id="KPPQFHQ"/>
<dbReference type="PRO" id="PR:Q54IJ9"/>
<dbReference type="Proteomes" id="UP000002195">
    <property type="component" value="Chromosome 5"/>
</dbReference>
<dbReference type="GO" id="GO:0005634">
    <property type="term" value="C:nucleus"/>
    <property type="evidence" value="ECO:0000318"/>
    <property type="project" value="GO_Central"/>
</dbReference>
<dbReference type="GO" id="GO:0003700">
    <property type="term" value="F:DNA-binding transcription factor activity"/>
    <property type="evidence" value="ECO:0007669"/>
    <property type="project" value="InterPro"/>
</dbReference>
<dbReference type="GO" id="GO:0043565">
    <property type="term" value="F:sequence-specific DNA binding"/>
    <property type="evidence" value="ECO:0000318"/>
    <property type="project" value="GO_Central"/>
</dbReference>
<dbReference type="GO" id="GO:0010468">
    <property type="term" value="P:regulation of gene expression"/>
    <property type="evidence" value="ECO:0000318"/>
    <property type="project" value="GO_Central"/>
</dbReference>
<dbReference type="CDD" id="cd14686">
    <property type="entry name" value="bZIP"/>
    <property type="match status" value="1"/>
</dbReference>
<dbReference type="Gene3D" id="1.20.5.170">
    <property type="match status" value="1"/>
</dbReference>
<dbReference type="InterPro" id="IPR004827">
    <property type="entry name" value="bZIP"/>
</dbReference>
<dbReference type="InterPro" id="IPR046347">
    <property type="entry name" value="bZIP_sf"/>
</dbReference>
<dbReference type="PANTHER" id="PTHR14312">
    <property type="entry name" value="CREB/ATF BZIP TRANSCRIPTION FACTOR"/>
    <property type="match status" value="1"/>
</dbReference>
<dbReference type="PANTHER" id="PTHR14312:SF2">
    <property type="entry name" value="GLYCOSYLTRANSFERASE-RELATED"/>
    <property type="match status" value="1"/>
</dbReference>
<dbReference type="SMART" id="SM00338">
    <property type="entry name" value="BRLZ"/>
    <property type="match status" value="1"/>
</dbReference>
<dbReference type="SUPFAM" id="SSF57959">
    <property type="entry name" value="Leucine zipper domain"/>
    <property type="match status" value="1"/>
</dbReference>
<dbReference type="PROSITE" id="PS50217">
    <property type="entry name" value="BZIP"/>
    <property type="match status" value="1"/>
</dbReference>
<reference key="1">
    <citation type="journal article" date="2005" name="Nature">
        <title>The genome of the social amoeba Dictyostelium discoideum.</title>
        <authorList>
            <person name="Eichinger L."/>
            <person name="Pachebat J.A."/>
            <person name="Gloeckner G."/>
            <person name="Rajandream M.A."/>
            <person name="Sucgang R."/>
            <person name="Berriman M."/>
            <person name="Song J."/>
            <person name="Olsen R."/>
            <person name="Szafranski K."/>
            <person name="Xu Q."/>
            <person name="Tunggal B."/>
            <person name="Kummerfeld S."/>
            <person name="Madera M."/>
            <person name="Konfortov B.A."/>
            <person name="Rivero F."/>
            <person name="Bankier A.T."/>
            <person name="Lehmann R."/>
            <person name="Hamlin N."/>
            <person name="Davies R."/>
            <person name="Gaudet P."/>
            <person name="Fey P."/>
            <person name="Pilcher K."/>
            <person name="Chen G."/>
            <person name="Saunders D."/>
            <person name="Sodergren E.J."/>
            <person name="Davis P."/>
            <person name="Kerhornou A."/>
            <person name="Nie X."/>
            <person name="Hall N."/>
            <person name="Anjard C."/>
            <person name="Hemphill L."/>
            <person name="Bason N."/>
            <person name="Farbrother P."/>
            <person name="Desany B."/>
            <person name="Just E."/>
            <person name="Morio T."/>
            <person name="Rost R."/>
            <person name="Churcher C.M."/>
            <person name="Cooper J."/>
            <person name="Haydock S."/>
            <person name="van Driessche N."/>
            <person name="Cronin A."/>
            <person name="Goodhead I."/>
            <person name="Muzny D.M."/>
            <person name="Mourier T."/>
            <person name="Pain A."/>
            <person name="Lu M."/>
            <person name="Harper D."/>
            <person name="Lindsay R."/>
            <person name="Hauser H."/>
            <person name="James K.D."/>
            <person name="Quiles M."/>
            <person name="Madan Babu M."/>
            <person name="Saito T."/>
            <person name="Buchrieser C."/>
            <person name="Wardroper A."/>
            <person name="Felder M."/>
            <person name="Thangavelu M."/>
            <person name="Johnson D."/>
            <person name="Knights A."/>
            <person name="Loulseged H."/>
            <person name="Mungall K.L."/>
            <person name="Oliver K."/>
            <person name="Price C."/>
            <person name="Quail M.A."/>
            <person name="Urushihara H."/>
            <person name="Hernandez J."/>
            <person name="Rabbinowitsch E."/>
            <person name="Steffen D."/>
            <person name="Sanders M."/>
            <person name="Ma J."/>
            <person name="Kohara Y."/>
            <person name="Sharp S."/>
            <person name="Simmonds M.N."/>
            <person name="Spiegler S."/>
            <person name="Tivey A."/>
            <person name="Sugano S."/>
            <person name="White B."/>
            <person name="Walker D."/>
            <person name="Woodward J.R."/>
            <person name="Winckler T."/>
            <person name="Tanaka Y."/>
            <person name="Shaulsky G."/>
            <person name="Schleicher M."/>
            <person name="Weinstock G.M."/>
            <person name="Rosenthal A."/>
            <person name="Cox E.C."/>
            <person name="Chisholm R.L."/>
            <person name="Gibbs R.A."/>
            <person name="Loomis W.F."/>
            <person name="Platzer M."/>
            <person name="Kay R.R."/>
            <person name="Williams J.G."/>
            <person name="Dear P.H."/>
            <person name="Noegel A.A."/>
            <person name="Barrell B.G."/>
            <person name="Kuspa A."/>
        </authorList>
    </citation>
    <scope>NUCLEOTIDE SEQUENCE [LARGE SCALE GENOMIC DNA]</scope>
    <source>
        <strain>AX4</strain>
    </source>
</reference>
<reference key="2">
    <citation type="journal article" date="2006" name="Development">
        <title>bZIP transcription factor interactions regulate DIF responses in Dictyostelium.</title>
        <authorList>
            <person name="Huang E."/>
            <person name="Blagg S.L."/>
            <person name="Keller T."/>
            <person name="Katoh M."/>
            <person name="Shaulsky G."/>
            <person name="Thompson C.R.L."/>
        </authorList>
    </citation>
    <scope>IDENTIFICATION</scope>
</reference>
<gene>
    <name type="primary">bzpQ</name>
    <name type="ORF">DDB_G0288705</name>
</gene>
<evidence type="ECO:0000250" key="1"/>
<evidence type="ECO:0000255" key="2"/>
<evidence type="ECO:0000255" key="3">
    <source>
        <dbReference type="PROSITE-ProRule" id="PRU00978"/>
    </source>
</evidence>
<evidence type="ECO:0000256" key="4">
    <source>
        <dbReference type="SAM" id="MobiDB-lite"/>
    </source>
</evidence>
<evidence type="ECO:0000305" key="5"/>
<name>BZPQ_DICDI</name>
<keyword id="KW-0175">Coiled coil</keyword>
<keyword id="KW-0238">DNA-binding</keyword>
<keyword id="KW-0539">Nucleus</keyword>
<keyword id="KW-1185">Reference proteome</keyword>
<keyword id="KW-0804">Transcription</keyword>
<keyword id="KW-0805">Transcription regulation</keyword>
<comment type="function">
    <text evidence="1">Probable transcriptional regulator.</text>
</comment>
<comment type="subcellular location">
    <subcellularLocation>
        <location evidence="3">Nucleus</location>
    </subcellularLocation>
</comment>
<comment type="similarity">
    <text evidence="5">Belongs to the bZIP family.</text>
</comment>
<accession>Q54IJ9</accession>
<organism>
    <name type="scientific">Dictyostelium discoideum</name>
    <name type="common">Social amoeba</name>
    <dbReference type="NCBI Taxonomy" id="44689"/>
    <lineage>
        <taxon>Eukaryota</taxon>
        <taxon>Amoebozoa</taxon>
        <taxon>Evosea</taxon>
        <taxon>Eumycetozoa</taxon>
        <taxon>Dictyostelia</taxon>
        <taxon>Dictyosteliales</taxon>
        <taxon>Dictyosteliaceae</taxon>
        <taxon>Dictyostelium</taxon>
    </lineage>
</organism>
<proteinExistence type="inferred from homology"/>
<feature type="chain" id="PRO_0000384411" description="Probable basic-leucine zipper transcription factor Q">
    <location>
        <begin position="1"/>
        <end position="976"/>
    </location>
</feature>
<feature type="domain" description="bZIP" evidence="3">
    <location>
        <begin position="504"/>
        <end position="567"/>
    </location>
</feature>
<feature type="region of interest" description="Disordered" evidence="4">
    <location>
        <begin position="104"/>
        <end position="128"/>
    </location>
</feature>
<feature type="region of interest" description="Disordered" evidence="4">
    <location>
        <begin position="374"/>
        <end position="499"/>
    </location>
</feature>
<feature type="region of interest" description="Basic motif" evidence="3">
    <location>
        <begin position="505"/>
        <end position="507"/>
    </location>
</feature>
<feature type="region of interest" description="Leucine-zipper" evidence="3">
    <location>
        <begin position="509"/>
        <end position="516"/>
    </location>
</feature>
<feature type="region of interest" description="Disordered" evidence="4">
    <location>
        <begin position="855"/>
        <end position="957"/>
    </location>
</feature>
<feature type="coiled-coil region" evidence="2">
    <location>
        <begin position="57"/>
        <end position="110"/>
    </location>
</feature>
<feature type="coiled-coil region" evidence="2">
    <location>
        <begin position="136"/>
        <end position="287"/>
    </location>
</feature>
<feature type="compositionally biased region" description="Polar residues" evidence="4">
    <location>
        <begin position="374"/>
        <end position="385"/>
    </location>
</feature>
<feature type="compositionally biased region" description="Polar residues" evidence="4">
    <location>
        <begin position="393"/>
        <end position="411"/>
    </location>
</feature>
<feature type="compositionally biased region" description="Low complexity" evidence="4">
    <location>
        <begin position="420"/>
        <end position="468"/>
    </location>
</feature>
<feature type="compositionally biased region" description="Low complexity" evidence="4">
    <location>
        <begin position="476"/>
        <end position="490"/>
    </location>
</feature>
<feature type="compositionally biased region" description="Low complexity" evidence="4">
    <location>
        <begin position="855"/>
        <end position="938"/>
    </location>
</feature>
<protein>
    <recommendedName>
        <fullName>Probable basic-leucine zipper transcription factor Q</fullName>
    </recommendedName>
</protein>
<sequence>MEEFENFFSQLIPAPDQDIWLLAAQQTPQNNDGVSTSGIPIGWSLQNLAASTNNIAAIDSNPQIREQLQQLQQQQQQQQTQIQQQLQSYQQQQQQHYQQRQQQYQQQYQQPYTTPSPPDQIDYNQQLSPQQQQQQQQQQQQQQQQQQQQPQLQQQNNTISQQQQQQNLNFQVQFLQQQQQHQQQLQQQQEQFQHQQLQHQQQQYFIKQQLQQQQQQQQQQQQQQQQQQQQQQQQQQQQQQQQQQQNQHLSPILSPLPPIQQLQQYQQQQQQQQQQQQQQQQQQQQQQPQQQSINIGSSNTPLQHQAMLQAQSLMDSINTKQPPIPPTLQSPTQHQFLNTPVLDQHILSSIRPSYSQVTKANISTLPTEITNSLTNFNGTNNSTPNFEDLTGGKLSSNNIKNTATPLSSPPSTKNGKQKQPKNNNNNNNSSNNNNNNNQTTTQQKQSKNNNSYGNNSNNNNNNNNFNNNKLKKQNDSTTTPTITSPNMTSPIDSNGDFDLLDEDEKKKSISRINQNLASRNYRQRRKEYIKEIESKMAALTFENHQLKKENESLKETGGVEVMRPEPELITMVVEGKQIIIQLSQALKKNDDRSLIYLLHLYHCAIAKRYSIVEREVEKIVHPYTQSKLAAMGYIPKSDKMFLNCIAGPAADSWFQLFKNEAEITLEQSNKLEALRTQHGKIDSALLQERQELDLDIKKFYYTKILVLPNNPLIIGDIPAQPYNGELSQSPISNSPLEISQLLDFAGKLESLKKNFILHRNLMLDTLASLSSILTPRQEAMLLVRVHFYTSYDFSHMELLKDVWTNIVSSKSITGPLNISEALKKLSDTTNTHHSIENIVKPPQFHQYTPKQLKFENQSNNFGNNNGSKSKNIENNLNNSVNNNNNNNNNNNNNNNNNNNNNNNNNNNNNNNNNSNSNNNNNVNSNSSNVNSNNNNFNNAPQMVLNPPSADAIPYPSTTQLDKRFQWVSYPSAPPPN</sequence>